<sequence>MTIRDNHGVKVSGLAIMGGTFDPIHNGHLRTAVEILDRFHYSALKLIPCFQPVHKGRPSVLPQQRFEMAELAISSDDRLCVDSREMDREGPSYSIDTLRDLRSEVGPDESLIMVLGMDSFLSLPTWYKWQEIMDYAHLLVVSRPGWEPDLISELSGFCENYRAASPHELQCAPSGRVWFETLTPLGISSSMIRELARKKESIAYLLPEPVQKYIEQHQLYR</sequence>
<dbReference type="EC" id="2.7.7.18" evidence="1"/>
<dbReference type="EMBL" id="CP000749">
    <property type="protein sequence ID" value="ABR71763.1"/>
    <property type="molecule type" value="Genomic_DNA"/>
</dbReference>
<dbReference type="SMR" id="A6VZ84"/>
<dbReference type="STRING" id="400668.Mmwyl1_2851"/>
<dbReference type="KEGG" id="mmw:Mmwyl1_2851"/>
<dbReference type="eggNOG" id="COG1057">
    <property type="taxonomic scope" value="Bacteria"/>
</dbReference>
<dbReference type="HOGENOM" id="CLU_069765_0_0_6"/>
<dbReference type="OrthoDB" id="5295945at2"/>
<dbReference type="UniPathway" id="UPA00253">
    <property type="reaction ID" value="UER00332"/>
</dbReference>
<dbReference type="GO" id="GO:0005524">
    <property type="term" value="F:ATP binding"/>
    <property type="evidence" value="ECO:0007669"/>
    <property type="project" value="UniProtKB-KW"/>
</dbReference>
<dbReference type="GO" id="GO:0004515">
    <property type="term" value="F:nicotinate-nucleotide adenylyltransferase activity"/>
    <property type="evidence" value="ECO:0007669"/>
    <property type="project" value="UniProtKB-UniRule"/>
</dbReference>
<dbReference type="GO" id="GO:0009435">
    <property type="term" value="P:NAD biosynthetic process"/>
    <property type="evidence" value="ECO:0007669"/>
    <property type="project" value="UniProtKB-UniRule"/>
</dbReference>
<dbReference type="CDD" id="cd02165">
    <property type="entry name" value="NMNAT"/>
    <property type="match status" value="1"/>
</dbReference>
<dbReference type="Gene3D" id="3.40.50.620">
    <property type="entry name" value="HUPs"/>
    <property type="match status" value="1"/>
</dbReference>
<dbReference type="HAMAP" id="MF_00244">
    <property type="entry name" value="NaMN_adenylyltr"/>
    <property type="match status" value="1"/>
</dbReference>
<dbReference type="InterPro" id="IPR004821">
    <property type="entry name" value="Cyt_trans-like"/>
</dbReference>
<dbReference type="InterPro" id="IPR005248">
    <property type="entry name" value="NadD/NMNAT"/>
</dbReference>
<dbReference type="InterPro" id="IPR014729">
    <property type="entry name" value="Rossmann-like_a/b/a_fold"/>
</dbReference>
<dbReference type="NCBIfam" id="TIGR00125">
    <property type="entry name" value="cyt_tran_rel"/>
    <property type="match status" value="1"/>
</dbReference>
<dbReference type="NCBIfam" id="TIGR00482">
    <property type="entry name" value="nicotinate (nicotinamide) nucleotide adenylyltransferase"/>
    <property type="match status" value="1"/>
</dbReference>
<dbReference type="NCBIfam" id="NF000839">
    <property type="entry name" value="PRK00071.1-1"/>
    <property type="match status" value="1"/>
</dbReference>
<dbReference type="NCBIfam" id="NF000840">
    <property type="entry name" value="PRK00071.1-3"/>
    <property type="match status" value="1"/>
</dbReference>
<dbReference type="PANTHER" id="PTHR39321">
    <property type="entry name" value="NICOTINATE-NUCLEOTIDE ADENYLYLTRANSFERASE-RELATED"/>
    <property type="match status" value="1"/>
</dbReference>
<dbReference type="PANTHER" id="PTHR39321:SF3">
    <property type="entry name" value="PHOSPHOPANTETHEINE ADENYLYLTRANSFERASE"/>
    <property type="match status" value="1"/>
</dbReference>
<dbReference type="Pfam" id="PF01467">
    <property type="entry name" value="CTP_transf_like"/>
    <property type="match status" value="1"/>
</dbReference>
<dbReference type="SUPFAM" id="SSF52374">
    <property type="entry name" value="Nucleotidylyl transferase"/>
    <property type="match status" value="1"/>
</dbReference>
<comment type="function">
    <text evidence="1">Catalyzes the reversible adenylation of nicotinate mononucleotide (NaMN) to nicotinic acid adenine dinucleotide (NaAD).</text>
</comment>
<comment type="catalytic activity">
    <reaction evidence="1">
        <text>nicotinate beta-D-ribonucleotide + ATP + H(+) = deamido-NAD(+) + diphosphate</text>
        <dbReference type="Rhea" id="RHEA:22860"/>
        <dbReference type="ChEBI" id="CHEBI:15378"/>
        <dbReference type="ChEBI" id="CHEBI:30616"/>
        <dbReference type="ChEBI" id="CHEBI:33019"/>
        <dbReference type="ChEBI" id="CHEBI:57502"/>
        <dbReference type="ChEBI" id="CHEBI:58437"/>
        <dbReference type="EC" id="2.7.7.18"/>
    </reaction>
</comment>
<comment type="pathway">
    <text evidence="1">Cofactor biosynthesis; NAD(+) biosynthesis; deamido-NAD(+) from nicotinate D-ribonucleotide: step 1/1.</text>
</comment>
<comment type="similarity">
    <text evidence="1">Belongs to the NadD family.</text>
</comment>
<gene>
    <name evidence="1" type="primary">nadD</name>
    <name type="ordered locus">Mmwyl1_2851</name>
</gene>
<evidence type="ECO:0000255" key="1">
    <source>
        <dbReference type="HAMAP-Rule" id="MF_00244"/>
    </source>
</evidence>
<protein>
    <recommendedName>
        <fullName evidence="1">Probable nicotinate-nucleotide adenylyltransferase</fullName>
        <ecNumber evidence="1">2.7.7.18</ecNumber>
    </recommendedName>
    <alternativeName>
        <fullName evidence="1">Deamido-NAD(+) diphosphorylase</fullName>
    </alternativeName>
    <alternativeName>
        <fullName evidence="1">Deamido-NAD(+) pyrophosphorylase</fullName>
    </alternativeName>
    <alternativeName>
        <fullName evidence="1">Nicotinate mononucleotide adenylyltransferase</fullName>
        <shortName evidence="1">NaMN adenylyltransferase</shortName>
    </alternativeName>
</protein>
<keyword id="KW-0067">ATP-binding</keyword>
<keyword id="KW-0520">NAD</keyword>
<keyword id="KW-0547">Nucleotide-binding</keyword>
<keyword id="KW-0548">Nucleotidyltransferase</keyword>
<keyword id="KW-0662">Pyridine nucleotide biosynthesis</keyword>
<keyword id="KW-0808">Transferase</keyword>
<name>NADD_MARMS</name>
<proteinExistence type="inferred from homology"/>
<feature type="chain" id="PRO_0000336705" description="Probable nicotinate-nucleotide adenylyltransferase">
    <location>
        <begin position="1"/>
        <end position="221"/>
    </location>
</feature>
<organism>
    <name type="scientific">Marinomonas sp. (strain MWYL1)</name>
    <dbReference type="NCBI Taxonomy" id="400668"/>
    <lineage>
        <taxon>Bacteria</taxon>
        <taxon>Pseudomonadati</taxon>
        <taxon>Pseudomonadota</taxon>
        <taxon>Gammaproteobacteria</taxon>
        <taxon>Oceanospirillales</taxon>
        <taxon>Oceanospirillaceae</taxon>
        <taxon>Marinomonas</taxon>
    </lineage>
</organism>
<accession>A6VZ84</accession>
<reference key="1">
    <citation type="submission" date="2007-06" db="EMBL/GenBank/DDBJ databases">
        <title>Complete sequence of Marinomonas sp. MWYL1.</title>
        <authorList>
            <consortium name="US DOE Joint Genome Institute"/>
            <person name="Copeland A."/>
            <person name="Lucas S."/>
            <person name="Lapidus A."/>
            <person name="Barry K."/>
            <person name="Glavina del Rio T."/>
            <person name="Dalin E."/>
            <person name="Tice H."/>
            <person name="Pitluck S."/>
            <person name="Kiss H."/>
            <person name="Brettin T."/>
            <person name="Bruce D."/>
            <person name="Detter J.C."/>
            <person name="Han C."/>
            <person name="Schmutz J."/>
            <person name="Larimer F."/>
            <person name="Land M."/>
            <person name="Hauser L."/>
            <person name="Kyrpides N."/>
            <person name="Kim E."/>
            <person name="Johnston A.W.B."/>
            <person name="Todd J.D."/>
            <person name="Rogers R."/>
            <person name="Wexler M."/>
            <person name="Bond P.L."/>
            <person name="Li Y."/>
            <person name="Richardson P."/>
        </authorList>
    </citation>
    <scope>NUCLEOTIDE SEQUENCE [LARGE SCALE GENOMIC DNA]</scope>
    <source>
        <strain>MWYL1</strain>
    </source>
</reference>